<organism>
    <name type="scientific">Mus musculus</name>
    <name type="common">Mouse</name>
    <dbReference type="NCBI Taxonomy" id="10090"/>
    <lineage>
        <taxon>Eukaryota</taxon>
        <taxon>Metazoa</taxon>
        <taxon>Chordata</taxon>
        <taxon>Craniata</taxon>
        <taxon>Vertebrata</taxon>
        <taxon>Euteleostomi</taxon>
        <taxon>Mammalia</taxon>
        <taxon>Eutheria</taxon>
        <taxon>Euarchontoglires</taxon>
        <taxon>Glires</taxon>
        <taxon>Rodentia</taxon>
        <taxon>Myomorpha</taxon>
        <taxon>Muroidea</taxon>
        <taxon>Muridae</taxon>
        <taxon>Murinae</taxon>
        <taxon>Mus</taxon>
        <taxon>Mus</taxon>
    </lineage>
</organism>
<comment type="function">
    <text evidence="4 5 6">Transcription repressor that plays a role in regulation of embryonic stem cells (ESCs) differentiation. Required for ESCs differentiation and acts by mediating autorepression of NANOG in ESCs: binds to the NANOG promoter and promotes association of NANOG protein to its own promoter and recruits the NuRD complex, which deacetylates histones. Not required for establishement and maintenance of ESCs. Represses the transcription of a number of genes including GAST, ODC1 and VIM. Binds to the G-rich box in the enhancer region of these genes.</text>
</comment>
<comment type="subunit">
    <text evidence="5 6">Interacts with NANOG. Associates with the NuRD complex.</text>
</comment>
<comment type="interaction">
    <interactant intactId="EBI-2312719">
        <id>Q99LI5</id>
    </interactant>
    <interactant intactId="EBI-2312517">
        <id>Q80Z64</id>
        <label>Nanog</label>
    </interactant>
    <organismsDiffer>false</organismsDiffer>
    <experiments>5</experiments>
</comment>
<comment type="subcellular location">
    <subcellularLocation>
        <location evidence="7">Nucleus</location>
    </subcellularLocation>
</comment>
<comment type="disruption phenotype">
    <text evidence="5">Embryos die between embryonic day 7.5 (E7.5) and E8.5, due to dysregulation of pluripotency and lineage specific markers in embryonic stem cells (ESCs). Embryos show abnormal embryonic body differentiation.</text>
</comment>
<comment type="similarity">
    <text evidence="7">Belongs to the krueppel C2H2-type zinc-finger protein family.</text>
</comment>
<evidence type="ECO:0000250" key="1">
    <source>
        <dbReference type="UniProtKB" id="Q9Y2X9"/>
    </source>
</evidence>
<evidence type="ECO:0000255" key="2">
    <source>
        <dbReference type="PROSITE-ProRule" id="PRU00042"/>
    </source>
</evidence>
<evidence type="ECO:0000256" key="3">
    <source>
        <dbReference type="SAM" id="MobiDB-lite"/>
    </source>
</evidence>
<evidence type="ECO:0000269" key="4">
    <source>
    </source>
</evidence>
<evidence type="ECO:0000269" key="5">
    <source>
    </source>
</evidence>
<evidence type="ECO:0000269" key="6">
    <source>
    </source>
</evidence>
<evidence type="ECO:0000305" key="7"/>
<reference key="1">
    <citation type="journal article" date="2005" name="Science">
        <title>The transcriptional landscape of the mammalian genome.</title>
        <authorList>
            <person name="Carninci P."/>
            <person name="Kasukawa T."/>
            <person name="Katayama S."/>
            <person name="Gough J."/>
            <person name="Frith M.C."/>
            <person name="Maeda N."/>
            <person name="Oyama R."/>
            <person name="Ravasi T."/>
            <person name="Lenhard B."/>
            <person name="Wells C."/>
            <person name="Kodzius R."/>
            <person name="Shimokawa K."/>
            <person name="Bajic V.B."/>
            <person name="Brenner S.E."/>
            <person name="Batalov S."/>
            <person name="Forrest A.R."/>
            <person name="Zavolan M."/>
            <person name="Davis M.J."/>
            <person name="Wilming L.G."/>
            <person name="Aidinis V."/>
            <person name="Allen J.E."/>
            <person name="Ambesi-Impiombato A."/>
            <person name="Apweiler R."/>
            <person name="Aturaliya R.N."/>
            <person name="Bailey T.L."/>
            <person name="Bansal M."/>
            <person name="Baxter L."/>
            <person name="Beisel K.W."/>
            <person name="Bersano T."/>
            <person name="Bono H."/>
            <person name="Chalk A.M."/>
            <person name="Chiu K.P."/>
            <person name="Choudhary V."/>
            <person name="Christoffels A."/>
            <person name="Clutterbuck D.R."/>
            <person name="Crowe M.L."/>
            <person name="Dalla E."/>
            <person name="Dalrymple B.P."/>
            <person name="de Bono B."/>
            <person name="Della Gatta G."/>
            <person name="di Bernardo D."/>
            <person name="Down T."/>
            <person name="Engstrom P."/>
            <person name="Fagiolini M."/>
            <person name="Faulkner G."/>
            <person name="Fletcher C.F."/>
            <person name="Fukushima T."/>
            <person name="Furuno M."/>
            <person name="Futaki S."/>
            <person name="Gariboldi M."/>
            <person name="Georgii-Hemming P."/>
            <person name="Gingeras T.R."/>
            <person name="Gojobori T."/>
            <person name="Green R.E."/>
            <person name="Gustincich S."/>
            <person name="Harbers M."/>
            <person name="Hayashi Y."/>
            <person name="Hensch T.K."/>
            <person name="Hirokawa N."/>
            <person name="Hill D."/>
            <person name="Huminiecki L."/>
            <person name="Iacono M."/>
            <person name="Ikeo K."/>
            <person name="Iwama A."/>
            <person name="Ishikawa T."/>
            <person name="Jakt M."/>
            <person name="Kanapin A."/>
            <person name="Katoh M."/>
            <person name="Kawasawa Y."/>
            <person name="Kelso J."/>
            <person name="Kitamura H."/>
            <person name="Kitano H."/>
            <person name="Kollias G."/>
            <person name="Krishnan S.P."/>
            <person name="Kruger A."/>
            <person name="Kummerfeld S.K."/>
            <person name="Kurochkin I.V."/>
            <person name="Lareau L.F."/>
            <person name="Lazarevic D."/>
            <person name="Lipovich L."/>
            <person name="Liu J."/>
            <person name="Liuni S."/>
            <person name="McWilliam S."/>
            <person name="Madan Babu M."/>
            <person name="Madera M."/>
            <person name="Marchionni L."/>
            <person name="Matsuda H."/>
            <person name="Matsuzawa S."/>
            <person name="Miki H."/>
            <person name="Mignone F."/>
            <person name="Miyake S."/>
            <person name="Morris K."/>
            <person name="Mottagui-Tabar S."/>
            <person name="Mulder N."/>
            <person name="Nakano N."/>
            <person name="Nakauchi H."/>
            <person name="Ng P."/>
            <person name="Nilsson R."/>
            <person name="Nishiguchi S."/>
            <person name="Nishikawa S."/>
            <person name="Nori F."/>
            <person name="Ohara O."/>
            <person name="Okazaki Y."/>
            <person name="Orlando V."/>
            <person name="Pang K.C."/>
            <person name="Pavan W.J."/>
            <person name="Pavesi G."/>
            <person name="Pesole G."/>
            <person name="Petrovsky N."/>
            <person name="Piazza S."/>
            <person name="Reed J."/>
            <person name="Reid J.F."/>
            <person name="Ring B.Z."/>
            <person name="Ringwald M."/>
            <person name="Rost B."/>
            <person name="Ruan Y."/>
            <person name="Salzberg S.L."/>
            <person name="Sandelin A."/>
            <person name="Schneider C."/>
            <person name="Schoenbach C."/>
            <person name="Sekiguchi K."/>
            <person name="Semple C.A."/>
            <person name="Seno S."/>
            <person name="Sessa L."/>
            <person name="Sheng Y."/>
            <person name="Shibata Y."/>
            <person name="Shimada H."/>
            <person name="Shimada K."/>
            <person name="Silva D."/>
            <person name="Sinclair B."/>
            <person name="Sperling S."/>
            <person name="Stupka E."/>
            <person name="Sugiura K."/>
            <person name="Sultana R."/>
            <person name="Takenaka Y."/>
            <person name="Taki K."/>
            <person name="Tammoja K."/>
            <person name="Tan S.L."/>
            <person name="Tang S."/>
            <person name="Taylor M.S."/>
            <person name="Tegner J."/>
            <person name="Teichmann S.A."/>
            <person name="Ueda H.R."/>
            <person name="van Nimwegen E."/>
            <person name="Verardo R."/>
            <person name="Wei C.L."/>
            <person name="Yagi K."/>
            <person name="Yamanishi H."/>
            <person name="Zabarovsky E."/>
            <person name="Zhu S."/>
            <person name="Zimmer A."/>
            <person name="Hide W."/>
            <person name="Bult C."/>
            <person name="Grimmond S.M."/>
            <person name="Teasdale R.D."/>
            <person name="Liu E.T."/>
            <person name="Brusic V."/>
            <person name="Quackenbush J."/>
            <person name="Wahlestedt C."/>
            <person name="Mattick J.S."/>
            <person name="Hume D.A."/>
            <person name="Kai C."/>
            <person name="Sasaki D."/>
            <person name="Tomaru Y."/>
            <person name="Fukuda S."/>
            <person name="Kanamori-Katayama M."/>
            <person name="Suzuki M."/>
            <person name="Aoki J."/>
            <person name="Arakawa T."/>
            <person name="Iida J."/>
            <person name="Imamura K."/>
            <person name="Itoh M."/>
            <person name="Kato T."/>
            <person name="Kawaji H."/>
            <person name="Kawagashira N."/>
            <person name="Kawashima T."/>
            <person name="Kojima M."/>
            <person name="Kondo S."/>
            <person name="Konno H."/>
            <person name="Nakano K."/>
            <person name="Ninomiya N."/>
            <person name="Nishio T."/>
            <person name="Okada M."/>
            <person name="Plessy C."/>
            <person name="Shibata K."/>
            <person name="Shiraki T."/>
            <person name="Suzuki S."/>
            <person name="Tagami M."/>
            <person name="Waki K."/>
            <person name="Watahiki A."/>
            <person name="Okamura-Oho Y."/>
            <person name="Suzuki H."/>
            <person name="Kawai J."/>
            <person name="Hayashizaki Y."/>
        </authorList>
    </citation>
    <scope>NUCLEOTIDE SEQUENCE [LARGE SCALE MRNA]</scope>
    <source>
        <strain>C57BL/6J</strain>
        <strain>NOD</strain>
        <tissue>Heart</tissue>
        <tissue>Spleen</tissue>
    </source>
</reference>
<reference key="2">
    <citation type="submission" date="2005-07" db="EMBL/GenBank/DDBJ databases">
        <title>Cloning of mouse full open reading frames in Gateway(R) system entry vector (pDONR201).</title>
        <authorList>
            <person name="Ebert L."/>
            <person name="Muenstermann E."/>
            <person name="Schatten R."/>
            <person name="Henze S."/>
            <person name="Bohn E."/>
            <person name="Mollenhauer J."/>
            <person name="Wiemann S."/>
            <person name="Schick M."/>
            <person name="Korn B."/>
        </authorList>
    </citation>
    <scope>NUCLEOTIDE SEQUENCE [LARGE SCALE MRNA]</scope>
</reference>
<reference key="3">
    <citation type="journal article" date="2009" name="PLoS Biol.">
        <title>Lineage-specific biology revealed by a finished genome assembly of the mouse.</title>
        <authorList>
            <person name="Church D.M."/>
            <person name="Goodstadt L."/>
            <person name="Hillier L.W."/>
            <person name="Zody M.C."/>
            <person name="Goldstein S."/>
            <person name="She X."/>
            <person name="Bult C.J."/>
            <person name="Agarwala R."/>
            <person name="Cherry J.L."/>
            <person name="DiCuccio M."/>
            <person name="Hlavina W."/>
            <person name="Kapustin Y."/>
            <person name="Meric P."/>
            <person name="Maglott D."/>
            <person name="Birtle Z."/>
            <person name="Marques A.C."/>
            <person name="Graves T."/>
            <person name="Zhou S."/>
            <person name="Teague B."/>
            <person name="Potamousis K."/>
            <person name="Churas C."/>
            <person name="Place M."/>
            <person name="Herschleb J."/>
            <person name="Runnheim R."/>
            <person name="Forrest D."/>
            <person name="Amos-Landgraf J."/>
            <person name="Schwartz D.C."/>
            <person name="Cheng Z."/>
            <person name="Lindblad-Toh K."/>
            <person name="Eichler E.E."/>
            <person name="Ponting C.P."/>
        </authorList>
    </citation>
    <scope>NUCLEOTIDE SEQUENCE [LARGE SCALE GENOMIC DNA]</scope>
    <source>
        <strain>C57BL/6J</strain>
    </source>
</reference>
<reference key="4">
    <citation type="journal article" date="2004" name="Genome Res.">
        <title>The status, quality, and expansion of the NIH full-length cDNA project: the Mammalian Gene Collection (MGC).</title>
        <authorList>
            <consortium name="The MGC Project Team"/>
        </authorList>
    </citation>
    <scope>NUCLEOTIDE SEQUENCE [LARGE SCALE MRNA]</scope>
    <source>
        <strain>FVB/N</strain>
        <tissue>Embryo</tissue>
        <tissue>Mammary tumor</tissue>
    </source>
</reference>
<reference key="5">
    <citation type="journal article" date="2008" name="Stem Cells">
        <title>The transcription factor Zfp281 controls embryonic stem cell pluripotency by direct activation and repression of target genes.</title>
        <authorList>
            <person name="Wang Z.X."/>
            <person name="Teh C.H."/>
            <person name="Chan C.M."/>
            <person name="Chu C."/>
            <person name="Rossbach M."/>
            <person name="Kunarso G."/>
            <person name="Allapitchay T.B."/>
            <person name="Wong K.Y."/>
            <person name="Stanton L.W."/>
        </authorList>
    </citation>
    <scope>FUNCTION</scope>
    <scope>DNA-BINDING</scope>
</reference>
<reference key="6">
    <citation type="journal article" date="2009" name="Immunity">
        <title>The phagosomal proteome in interferon-gamma-activated macrophages.</title>
        <authorList>
            <person name="Trost M."/>
            <person name="English L."/>
            <person name="Lemieux S."/>
            <person name="Courcelles M."/>
            <person name="Desjardins M."/>
            <person name="Thibault P."/>
        </authorList>
    </citation>
    <scope>IDENTIFICATION BY MASS SPECTROMETRY [LARGE SCALE ANALYSIS]</scope>
</reference>
<reference key="7">
    <citation type="journal article" date="2011" name="Stem Cells">
        <title>Zfp281 functions as a transcriptional repressor for pluripotency of mouse embryonic stem cells.</title>
        <authorList>
            <person name="Fidalgo M."/>
            <person name="Shekar P.C."/>
            <person name="Ang Y.S."/>
            <person name="Fujiwara Y."/>
            <person name="Orkin S.H."/>
            <person name="Wang J."/>
        </authorList>
    </citation>
    <scope>FUNCTION</scope>
    <scope>DNA-BINDING</scope>
    <scope>DISRUPTION PHENOTYPE</scope>
    <scope>INTERACTION WITH NANOG</scope>
</reference>
<reference key="8">
    <citation type="journal article" date="2012" name="Proc. Natl. Acad. Sci. U.S.A.">
        <title>Zfp281 mediates Nanog autorepression through recruitment of the NuRD complex and inhibits somatic cell reprogramming.</title>
        <authorList>
            <person name="Fidalgo M."/>
            <person name="Faiola F."/>
            <person name="Pereira C.F."/>
            <person name="Ding J."/>
            <person name="Saunders A."/>
            <person name="Gingold J."/>
            <person name="Schaniel C."/>
            <person name="Lemischka I.R."/>
            <person name="Silva J.C."/>
            <person name="Wang J."/>
        </authorList>
    </citation>
    <scope>FUNCTION</scope>
    <scope>INTERACTION WITH NANOG</scope>
    <scope>INTERACTION WITH THE NURD COMPLEX</scope>
</reference>
<proteinExistence type="evidence at protein level"/>
<feature type="chain" id="PRO_0000420492" description="Zinc finger protein 281">
    <location>
        <begin position="1"/>
        <end position="893"/>
    </location>
</feature>
<feature type="zinc finger region" description="C2H2-type 1" evidence="2">
    <location>
        <begin position="258"/>
        <end position="280"/>
    </location>
</feature>
<feature type="zinc finger region" description="C2H2-type 2" evidence="2">
    <location>
        <begin position="286"/>
        <end position="308"/>
    </location>
</feature>
<feature type="zinc finger region" description="C2H2-type 3" evidence="2">
    <location>
        <begin position="314"/>
        <end position="336"/>
    </location>
</feature>
<feature type="zinc finger region" description="C2H2-type 4; atypical" evidence="2">
    <location>
        <begin position="342"/>
        <end position="364"/>
    </location>
</feature>
<feature type="region of interest" description="Disordered" evidence="3">
    <location>
        <begin position="1"/>
        <end position="113"/>
    </location>
</feature>
<feature type="region of interest" description="Disordered" evidence="3">
    <location>
        <begin position="126"/>
        <end position="148"/>
    </location>
</feature>
<feature type="region of interest" description="Disordered" evidence="3">
    <location>
        <begin position="153"/>
        <end position="172"/>
    </location>
</feature>
<feature type="region of interest" description="Disordered" evidence="3">
    <location>
        <begin position="198"/>
        <end position="251"/>
    </location>
</feature>
<feature type="region of interest" description="Disordered" evidence="3">
    <location>
        <begin position="371"/>
        <end position="425"/>
    </location>
</feature>
<feature type="region of interest" description="Disordered" evidence="3">
    <location>
        <begin position="613"/>
        <end position="658"/>
    </location>
</feature>
<feature type="region of interest" description="Disordered" evidence="3">
    <location>
        <begin position="775"/>
        <end position="815"/>
    </location>
</feature>
<feature type="compositionally biased region" description="Gly residues" evidence="3">
    <location>
        <begin position="7"/>
        <end position="36"/>
    </location>
</feature>
<feature type="compositionally biased region" description="Basic and acidic residues" evidence="3">
    <location>
        <begin position="127"/>
        <end position="139"/>
    </location>
</feature>
<feature type="compositionally biased region" description="Gly residues" evidence="3">
    <location>
        <begin position="161"/>
        <end position="170"/>
    </location>
</feature>
<feature type="compositionally biased region" description="Basic and acidic residues" evidence="3">
    <location>
        <begin position="201"/>
        <end position="216"/>
    </location>
</feature>
<feature type="compositionally biased region" description="Polar residues" evidence="3">
    <location>
        <begin position="377"/>
        <end position="396"/>
    </location>
</feature>
<feature type="compositionally biased region" description="Basic and acidic residues" evidence="3">
    <location>
        <begin position="616"/>
        <end position="641"/>
    </location>
</feature>
<feature type="compositionally biased region" description="Polar residues" evidence="3">
    <location>
        <begin position="645"/>
        <end position="658"/>
    </location>
</feature>
<feature type="compositionally biased region" description="Polar residues" evidence="3">
    <location>
        <begin position="775"/>
        <end position="813"/>
    </location>
</feature>
<feature type="modified residue" description="Phosphoserine" evidence="1">
    <location>
        <position position="392"/>
    </location>
</feature>
<feature type="modified residue" description="Phosphoserine" evidence="1">
    <location>
        <position position="481"/>
    </location>
</feature>
<feature type="modified residue" description="Phosphoserine" evidence="1">
    <location>
        <position position="648"/>
    </location>
</feature>
<feature type="modified residue" description="Phosphoserine" evidence="1">
    <location>
        <position position="782"/>
    </location>
</feature>
<feature type="modified residue" description="Phosphoserine" evidence="1">
    <location>
        <position position="805"/>
    </location>
</feature>
<feature type="modified residue" description="Phosphothreonine" evidence="1">
    <location>
        <position position="886"/>
    </location>
</feature>
<feature type="cross-link" description="Glycyl lysine isopeptide (Lys-Gly) (interchain with G-Cter in SUMO2)" evidence="1">
    <location>
        <position position="2"/>
    </location>
</feature>
<feature type="cross-link" description="Glycyl lysine isopeptide (Lys-Gly) (interchain with G-Cter in SUMO2)" evidence="1">
    <location>
        <position position="100"/>
    </location>
</feature>
<feature type="cross-link" description="Glycyl lysine isopeptide (Lys-Gly) (interchain with G-Cter in SUMO2)" evidence="1">
    <location>
        <position position="127"/>
    </location>
</feature>
<feature type="cross-link" description="Glycyl lysine isopeptide (Lys-Gly) (interchain with G-Cter in SUMO2)" evidence="1">
    <location>
        <position position="211"/>
    </location>
</feature>
<feature type="cross-link" description="Glycyl lysine isopeptide (Lys-Gly) (interchain with G-Cter in SUMO2)" evidence="1">
    <location>
        <position position="217"/>
    </location>
</feature>
<feature type="cross-link" description="Glycyl lysine isopeptide (Lys-Gly) (interchain with G-Cter in SUMO2)" evidence="1">
    <location>
        <position position="223"/>
    </location>
</feature>
<feature type="cross-link" description="Glycyl lysine isopeptide (Lys-Gly) (interchain with G-Cter in SUMO2)" evidence="1">
    <location>
        <position position="230"/>
    </location>
</feature>
<feature type="cross-link" description="Glycyl lysine isopeptide (Lys-Gly) (interchain with G-Cter in SUMO2)" evidence="1">
    <location>
        <position position="240"/>
    </location>
</feature>
<feature type="cross-link" description="Glycyl lysine isopeptide (Lys-Gly) (interchain with G-Cter in SUMO2)" evidence="1">
    <location>
        <position position="256"/>
    </location>
</feature>
<feature type="cross-link" description="Glycyl lysine isopeptide (Lys-Gly) (interchain with G-Cter in SUMO2)" evidence="1">
    <location>
        <position position="298"/>
    </location>
</feature>
<feature type="cross-link" description="Glycyl lysine isopeptide (Lys-Gly) (interchain with G-Cter in SUMO2)" evidence="1">
    <location>
        <position position="322"/>
    </location>
</feature>
<feature type="cross-link" description="Glycyl lysine isopeptide (Lys-Gly) (interchain with G-Cter in SUMO2)" evidence="1">
    <location>
        <position position="370"/>
    </location>
</feature>
<feature type="cross-link" description="Glycyl lysine isopeptide (Lys-Gly) (interchain with G-Cter in SUMO2)" evidence="1">
    <location>
        <position position="406"/>
    </location>
</feature>
<feature type="cross-link" description="Glycyl lysine isopeptide (Lys-Gly) (interchain with G-Cter in SUMO2)" evidence="1">
    <location>
        <position position="413"/>
    </location>
</feature>
<feature type="cross-link" description="Glycyl lysine isopeptide (Lys-Gly) (interchain with G-Cter in SUMO2)" evidence="1">
    <location>
        <position position="457"/>
    </location>
</feature>
<feature type="cross-link" description="Glycyl lysine isopeptide (Lys-Gly) (interchain with G-Cter in SUMO2)" evidence="1">
    <location>
        <position position="474"/>
    </location>
</feature>
<feature type="cross-link" description="Glycyl lysine isopeptide (Lys-Gly) (interchain with G-Cter in SUMO2)" evidence="1">
    <location>
        <position position="490"/>
    </location>
</feature>
<feature type="cross-link" description="Glycyl lysine isopeptide (Lys-Gly) (interchain with G-Cter in SUMO2)" evidence="1">
    <location>
        <position position="495"/>
    </location>
</feature>
<feature type="cross-link" description="Glycyl lysine isopeptide (Lys-Gly) (interchain with G-Cter in SUMO2)" evidence="1">
    <location>
        <position position="536"/>
    </location>
</feature>
<feature type="cross-link" description="Glycyl lysine isopeptide (Lys-Gly) (interchain with G-Cter in SUMO2)" evidence="1">
    <location>
        <position position="596"/>
    </location>
</feature>
<feature type="cross-link" description="Glycyl lysine isopeptide (Lys-Gly) (interchain with G-Cter in SUMO2)" evidence="1">
    <location>
        <position position="614"/>
    </location>
</feature>
<feature type="cross-link" description="Glycyl lysine isopeptide (Lys-Gly) (interchain with G-Cter in SUMO2)" evidence="1">
    <location>
        <position position="619"/>
    </location>
</feature>
<feature type="cross-link" description="Glycyl lysine isopeptide (Lys-Gly) (interchain with G-Cter in SUMO2)" evidence="1">
    <location>
        <position position="658"/>
    </location>
</feature>
<feature type="cross-link" description="Glycyl lysine isopeptide (Lys-Gly) (interchain with G-Cter in SUMO2)" evidence="1">
    <location>
        <position position="667"/>
    </location>
</feature>
<feature type="cross-link" description="Glycyl lysine isopeptide (Lys-Gly) (interchain with G-Cter in SUMO2)" evidence="1">
    <location>
        <position position="784"/>
    </location>
</feature>
<feature type="cross-link" description="Glycyl lysine isopeptide (Lys-Gly) (interchain with G-Cter in SUMO2)" evidence="1">
    <location>
        <position position="789"/>
    </location>
</feature>
<feature type="cross-link" description="Glycyl lysine isopeptide (Lys-Gly) (interchain with G-Cter in SUMO2)" evidence="1">
    <location>
        <position position="793"/>
    </location>
</feature>
<feature type="cross-link" description="Glycyl lysine isopeptide (Lys-Gly) (interchain with G-Cter in SUMO2)" evidence="1">
    <location>
        <position position="816"/>
    </location>
</feature>
<feature type="cross-link" description="Glycyl lysine isopeptide (Lys-Gly) (interchain with G-Cter in SUMO2)" evidence="1">
    <location>
        <position position="838"/>
    </location>
</feature>
<feature type="sequence conflict" description="In Ref. 1; BAE33992." evidence="7" ref="1">
    <original>V</original>
    <variation>A</variation>
    <location>
        <position position="194"/>
    </location>
</feature>
<feature type="sequence conflict" description="In Ref. 1; BAE33992." evidence="7" ref="1">
    <original>G</original>
    <variation>S</variation>
    <location>
        <position position="418"/>
    </location>
</feature>
<feature type="sequence conflict" description="In Ref. 2; CAJ18408." evidence="7" ref="2">
    <original>Y</original>
    <variation>C</variation>
    <location>
        <position position="434"/>
    </location>
</feature>
<feature type="sequence conflict" description="In Ref. 1; BAE33992." evidence="7" ref="1">
    <original>P</original>
    <variation>S</variation>
    <location>
        <position position="439"/>
    </location>
</feature>
<feature type="sequence conflict" description="In Ref. 2; CAJ18408." evidence="7" ref="2">
    <original>T</original>
    <variation>S</variation>
    <location>
        <position position="774"/>
    </location>
</feature>
<keyword id="KW-0221">Differentiation</keyword>
<keyword id="KW-0238">DNA-binding</keyword>
<keyword id="KW-1017">Isopeptide bond</keyword>
<keyword id="KW-0479">Metal-binding</keyword>
<keyword id="KW-0539">Nucleus</keyword>
<keyword id="KW-0597">Phosphoprotein</keyword>
<keyword id="KW-1185">Reference proteome</keyword>
<keyword id="KW-0677">Repeat</keyword>
<keyword id="KW-0678">Repressor</keyword>
<keyword id="KW-0804">Transcription</keyword>
<keyword id="KW-0805">Transcription regulation</keyword>
<keyword id="KW-0832">Ubl conjugation</keyword>
<keyword id="KW-0862">Zinc</keyword>
<keyword id="KW-0863">Zinc-finger</keyword>
<sequence length="893" mass="96685">MKIGSGFLSGGGGPSSSGGSGSGGSSGSASGGSGGGRRAEMEPTFPQSMVMFNHRLPPVTSFTRPAGTAAPPPQCVLSSSTSAAPAAEPPPPPAPDMTFKKEPAASAAAFPSQRTSWGFLQSLVSIKQEKPADPEEQPSHHHHHHHHYGGLFAGAEERSPGLGGGEGGSHGVIQDLSLLHQHAQQQPAQHHRDVLLSSGSRTDEHGNQEPKQDANVKKAKRPKPESQGIKAKRKPSASSKPLVGEGEGAVLSPSQKPHICDHCSAAFRSSYHLRRHVLIHTGERPFQCSQCSMGFIQKYLLQRHEKIHSREKPFGCDQCSMKFIQKYHMERHKRTHSGEKPYKCDTCQQYFSRTDRLLKHRRTCGEAIAKGAASAEPGSSNHNSMGNLAVLSQGNTSSSRRKSKSKSIAIENKEHKTGKTNESQMSNNINMQSYSVEMPTVSTSGSIIGTGIDELQKRVPKLIFKKGSRKNADKSYLNFVSPLPDVVGQKSLSGKPGGSLGIVSNNSVETISLLQSTSGKQGPISSNYDDAMQFSKKRRYLPTASSNSAFSINVGHMVSQQSVIQSAGVSVLDNEAPLSLIDSSALNAEIKSCHDKSGIPDEVLQSILDQYSGKSETQKEDPFNLTEPRVDLHTSGEHSELVQEENLSPGTQTPSNDKTSMLQEYSKYLQQAFEKSTNAGFTLGHGFQFVSLSSPLHNHTLFPEKQIYTTSPLECGFGQSVTSVLPSSLPKPPFGMLFGSQPGLYLSALDATHQQLTPSQELDDLIDSQKNLETSSAFQSSSQKLTSQKEQQKNLESSTSFQIPSQELASQIDPQKDIEPRTTYQIENFAQAFGSQFKSGSRVPMTFITNSNGEVDHRVRTSVSDFSGYTNMMSDVSEPCSTRVKTPTSQSYR</sequence>
<accession>Q99LI5</accession>
<accession>Q3U063</accession>
<accession>Q4FK52</accession>
<gene>
    <name type="primary">Znf281</name>
    <name type="synonym">Zfp281</name>
</gene>
<protein>
    <recommendedName>
        <fullName>Zinc finger protein 281</fullName>
    </recommendedName>
</protein>
<dbReference type="EMBL" id="AK142218">
    <property type="protein sequence ID" value="BAE24981.1"/>
    <property type="molecule type" value="mRNA"/>
</dbReference>
<dbReference type="EMBL" id="AK157189">
    <property type="protein sequence ID" value="BAE33992.1"/>
    <property type="molecule type" value="mRNA"/>
</dbReference>
<dbReference type="EMBL" id="CT010200">
    <property type="protein sequence ID" value="CAJ18408.1"/>
    <property type="molecule type" value="mRNA"/>
</dbReference>
<dbReference type="EMBL" id="AC126606">
    <property type="status" value="NOT_ANNOTATED_CDS"/>
    <property type="molecule type" value="Genomic_DNA"/>
</dbReference>
<dbReference type="EMBL" id="BC003243">
    <property type="protein sequence ID" value="AAH03243.1"/>
    <property type="molecule type" value="mRNA"/>
</dbReference>
<dbReference type="EMBL" id="BC062153">
    <property type="protein sequence ID" value="AAH62153.1"/>
    <property type="molecule type" value="mRNA"/>
</dbReference>
<dbReference type="CCDS" id="CCDS15327.1"/>
<dbReference type="RefSeq" id="NP_001153723.1">
    <property type="nucleotide sequence ID" value="NM_001160251.1"/>
</dbReference>
<dbReference type="RefSeq" id="NP_808311.1">
    <property type="nucleotide sequence ID" value="NM_177643.4"/>
</dbReference>
<dbReference type="SMR" id="Q99LI5"/>
<dbReference type="BioGRID" id="230516">
    <property type="interactions" value="40"/>
</dbReference>
<dbReference type="DIP" id="DIP-29927N"/>
<dbReference type="FunCoup" id="Q99LI5">
    <property type="interactions" value="3285"/>
</dbReference>
<dbReference type="IntAct" id="Q99LI5">
    <property type="interactions" value="3"/>
</dbReference>
<dbReference type="MINT" id="Q99LI5"/>
<dbReference type="STRING" id="10090.ENSMUSP00000107677"/>
<dbReference type="GlyGen" id="Q99LI5">
    <property type="glycosylation" value="8 sites, 1 N-linked glycan (1 site), 1 O-linked glycan (7 sites)"/>
</dbReference>
<dbReference type="iPTMnet" id="Q99LI5"/>
<dbReference type="PhosphoSitePlus" id="Q99LI5"/>
<dbReference type="jPOST" id="Q99LI5"/>
<dbReference type="PaxDb" id="10090-ENSMUSP00000107677"/>
<dbReference type="PeptideAtlas" id="Q99LI5"/>
<dbReference type="ProteomicsDB" id="275071"/>
<dbReference type="Pumba" id="Q99LI5"/>
<dbReference type="Antibodypedia" id="20632">
    <property type="antibodies" value="200 antibodies from 32 providers"/>
</dbReference>
<dbReference type="DNASU" id="226442"/>
<dbReference type="Ensembl" id="ENSMUST00000047734.15">
    <property type="protein sequence ID" value="ENSMUSP00000039003.9"/>
    <property type="gene ID" value="ENSMUSG00000041483.15"/>
</dbReference>
<dbReference type="Ensembl" id="ENSMUST00000112046.2">
    <property type="protein sequence ID" value="ENSMUSP00000107677.2"/>
    <property type="gene ID" value="ENSMUSG00000041483.15"/>
</dbReference>
<dbReference type="GeneID" id="226442"/>
<dbReference type="KEGG" id="mmu:226442"/>
<dbReference type="UCSC" id="uc007cuw.2">
    <property type="organism name" value="mouse"/>
</dbReference>
<dbReference type="AGR" id="MGI:3029290"/>
<dbReference type="CTD" id="226442"/>
<dbReference type="MGI" id="MGI:3029290">
    <property type="gene designation" value="Zfp281"/>
</dbReference>
<dbReference type="VEuPathDB" id="HostDB:ENSMUSG00000041483"/>
<dbReference type="eggNOG" id="KOG1721">
    <property type="taxonomic scope" value="Eukaryota"/>
</dbReference>
<dbReference type="GeneTree" id="ENSGT00940000161586"/>
<dbReference type="HOGENOM" id="CLU_017625_0_0_1"/>
<dbReference type="InParanoid" id="Q99LI5"/>
<dbReference type="OMA" id="FPPGMVM"/>
<dbReference type="OrthoDB" id="9899552at2759"/>
<dbReference type="PhylomeDB" id="Q99LI5"/>
<dbReference type="TreeFam" id="TF331779"/>
<dbReference type="BioGRID-ORCS" id="226442">
    <property type="hits" value="7 hits in 79 CRISPR screens"/>
</dbReference>
<dbReference type="ChiTaRS" id="Zfp281">
    <property type="organism name" value="mouse"/>
</dbReference>
<dbReference type="PRO" id="PR:Q99LI5"/>
<dbReference type="Proteomes" id="UP000000589">
    <property type="component" value="Chromosome 1"/>
</dbReference>
<dbReference type="RNAct" id="Q99LI5">
    <property type="molecule type" value="protein"/>
</dbReference>
<dbReference type="Bgee" id="ENSMUSG00000041483">
    <property type="expression patterns" value="Expressed in 1st arch mandibular component and 266 other cell types or tissues"/>
</dbReference>
<dbReference type="GO" id="GO:0005654">
    <property type="term" value="C:nucleoplasm"/>
    <property type="evidence" value="ECO:0007669"/>
    <property type="project" value="Ensembl"/>
</dbReference>
<dbReference type="GO" id="GO:0005634">
    <property type="term" value="C:nucleus"/>
    <property type="evidence" value="ECO:0000250"/>
    <property type="project" value="UniProtKB"/>
</dbReference>
<dbReference type="GO" id="GO:0003700">
    <property type="term" value="F:DNA-binding transcription factor activity"/>
    <property type="evidence" value="ECO:0000315"/>
    <property type="project" value="UniProtKB"/>
</dbReference>
<dbReference type="GO" id="GO:0001227">
    <property type="term" value="F:DNA-binding transcription repressor activity, RNA polymerase II-specific"/>
    <property type="evidence" value="ECO:0000315"/>
    <property type="project" value="UniProtKB"/>
</dbReference>
<dbReference type="GO" id="GO:0000978">
    <property type="term" value="F:RNA polymerase II cis-regulatory region sequence-specific DNA binding"/>
    <property type="evidence" value="ECO:0000314"/>
    <property type="project" value="UniProtKB"/>
</dbReference>
<dbReference type="GO" id="GO:0043565">
    <property type="term" value="F:sequence-specific DNA binding"/>
    <property type="evidence" value="ECO:0000250"/>
    <property type="project" value="UniProtKB"/>
</dbReference>
<dbReference type="GO" id="GO:0000976">
    <property type="term" value="F:transcription cis-regulatory region binding"/>
    <property type="evidence" value="ECO:0000250"/>
    <property type="project" value="UniProtKB"/>
</dbReference>
<dbReference type="GO" id="GO:0008270">
    <property type="term" value="F:zinc ion binding"/>
    <property type="evidence" value="ECO:0007669"/>
    <property type="project" value="UniProtKB-KW"/>
</dbReference>
<dbReference type="GO" id="GO:0010172">
    <property type="term" value="P:embryonic body morphogenesis"/>
    <property type="evidence" value="ECO:0000315"/>
    <property type="project" value="UniProtKB"/>
</dbReference>
<dbReference type="GO" id="GO:0045892">
    <property type="term" value="P:negative regulation of DNA-templated transcription"/>
    <property type="evidence" value="ECO:0000250"/>
    <property type="project" value="UniProtKB"/>
</dbReference>
<dbReference type="GO" id="GO:0010629">
    <property type="term" value="P:negative regulation of gene expression"/>
    <property type="evidence" value="ECO:0000250"/>
    <property type="project" value="UniProtKB"/>
</dbReference>
<dbReference type="GO" id="GO:0045893">
    <property type="term" value="P:positive regulation of DNA-templated transcription"/>
    <property type="evidence" value="ECO:0000250"/>
    <property type="project" value="UniProtKB"/>
</dbReference>
<dbReference type="GO" id="GO:0048863">
    <property type="term" value="P:stem cell differentiation"/>
    <property type="evidence" value="ECO:0000315"/>
    <property type="project" value="UniProtKB"/>
</dbReference>
<dbReference type="FunFam" id="3.30.160.60:FF:000067">
    <property type="entry name" value="Vascular endothelial zinc finger 1"/>
    <property type="match status" value="1"/>
</dbReference>
<dbReference type="FunFam" id="3.30.160.60:FF:000042">
    <property type="entry name" value="Zinc finger protein 148"/>
    <property type="match status" value="1"/>
</dbReference>
<dbReference type="FunFam" id="3.30.160.60:FF:000313">
    <property type="entry name" value="Zinc finger protein 281"/>
    <property type="match status" value="1"/>
</dbReference>
<dbReference type="FunFam" id="3.30.160.60:FF:000624">
    <property type="entry name" value="zinc finger protein 697"/>
    <property type="match status" value="1"/>
</dbReference>
<dbReference type="Gene3D" id="3.30.160.60">
    <property type="entry name" value="Classic Zinc Finger"/>
    <property type="match status" value="4"/>
</dbReference>
<dbReference type="InterPro" id="IPR050752">
    <property type="entry name" value="C2H2-ZF_domain"/>
</dbReference>
<dbReference type="InterPro" id="IPR036236">
    <property type="entry name" value="Znf_C2H2_sf"/>
</dbReference>
<dbReference type="InterPro" id="IPR013087">
    <property type="entry name" value="Znf_C2H2_type"/>
</dbReference>
<dbReference type="PANTHER" id="PTHR24384:SF189">
    <property type="entry name" value="C2H2-TYPE DOMAIN-CONTAINING PROTEIN-RELATED"/>
    <property type="match status" value="1"/>
</dbReference>
<dbReference type="PANTHER" id="PTHR24384">
    <property type="entry name" value="FINGER PUTATIVE TRANSCRIPTION FACTOR FAMILY-RELATED"/>
    <property type="match status" value="1"/>
</dbReference>
<dbReference type="Pfam" id="PF00096">
    <property type="entry name" value="zf-C2H2"/>
    <property type="match status" value="2"/>
</dbReference>
<dbReference type="SMART" id="SM00355">
    <property type="entry name" value="ZnF_C2H2"/>
    <property type="match status" value="4"/>
</dbReference>
<dbReference type="SUPFAM" id="SSF57667">
    <property type="entry name" value="beta-beta-alpha zinc fingers"/>
    <property type="match status" value="2"/>
</dbReference>
<dbReference type="PROSITE" id="PS00028">
    <property type="entry name" value="ZINC_FINGER_C2H2_1"/>
    <property type="match status" value="3"/>
</dbReference>
<dbReference type="PROSITE" id="PS50157">
    <property type="entry name" value="ZINC_FINGER_C2H2_2"/>
    <property type="match status" value="4"/>
</dbReference>
<name>ZN281_MOUSE</name>